<sequence>MNTFSQVWVFSDTPSRLPELMNGAQALANQINTFVLNDADGAQAIQLGANHVWKLNGKPDDRMIEDYASVMADTIRQHGADGLVLLPNTRRGKLLAAKLGYRLKAAVSNDASTVSVQDGKATVKHMVYGGLAIGEERIATPYAVLTISSGTFDAAQPDASRTGETHTVEWQAPAVAITRTATQARQSNSVDLDKARLVVSVGRGIGSKENIALAEQLCKAIGAELACSRPVAENEKWMEHERYVGISNLMLKPELYLAVGISGQIQHMVGANASQTIFAINKDKNAPIFQYADYGIVGDAVKILPALTAALAR</sequence>
<reference key="1">
    <citation type="journal article" date="2005" name="Nucleic Acids Res.">
        <title>Genome dynamics and diversity of Shigella species, the etiologic agents of bacillary dysentery.</title>
        <authorList>
            <person name="Yang F."/>
            <person name="Yang J."/>
            <person name="Zhang X."/>
            <person name="Chen L."/>
            <person name="Jiang Y."/>
            <person name="Yan Y."/>
            <person name="Tang X."/>
            <person name="Wang J."/>
            <person name="Xiong Z."/>
            <person name="Dong J."/>
            <person name="Xue Y."/>
            <person name="Zhu Y."/>
            <person name="Xu X."/>
            <person name="Sun L."/>
            <person name="Chen S."/>
            <person name="Nie H."/>
            <person name="Peng J."/>
            <person name="Xu J."/>
            <person name="Wang Y."/>
            <person name="Yuan Z."/>
            <person name="Wen Y."/>
            <person name="Yao Z."/>
            <person name="Shen Y."/>
            <person name="Qiang B."/>
            <person name="Hou Y."/>
            <person name="Yu J."/>
            <person name="Jin Q."/>
        </authorList>
    </citation>
    <scope>NUCLEOTIDE SEQUENCE [LARGE SCALE GENOMIC DNA]</scope>
    <source>
        <strain>Sd197</strain>
    </source>
</reference>
<feature type="chain" id="PRO_0000300966" description="Protein FixB">
    <location>
        <begin position="1"/>
        <end position="313"/>
    </location>
</feature>
<feature type="binding site" evidence="1">
    <location>
        <begin position="255"/>
        <end position="283"/>
    </location>
    <ligand>
        <name>FAD</name>
        <dbReference type="ChEBI" id="CHEBI:57692"/>
    </ligand>
</feature>
<proteinExistence type="inferred from homology"/>
<name>FIXB_SHIDS</name>
<organism>
    <name type="scientific">Shigella dysenteriae serotype 1 (strain Sd197)</name>
    <dbReference type="NCBI Taxonomy" id="300267"/>
    <lineage>
        <taxon>Bacteria</taxon>
        <taxon>Pseudomonadati</taxon>
        <taxon>Pseudomonadota</taxon>
        <taxon>Gammaproteobacteria</taxon>
        <taxon>Enterobacterales</taxon>
        <taxon>Enterobacteriaceae</taxon>
        <taxon>Shigella</taxon>
    </lineage>
</organism>
<gene>
    <name evidence="1" type="primary">fixB</name>
    <name type="ordered locus">SDY_0064</name>
</gene>
<comment type="function">
    <text evidence="1">Required for anaerobic carnitine reduction. May bring reductant to CaiA.</text>
</comment>
<comment type="pathway">
    <text evidence="1">Amine and polyamine metabolism; carnitine metabolism.</text>
</comment>
<comment type="subunit">
    <text evidence="1">Heterodimer of FixA and FixB.</text>
</comment>
<comment type="similarity">
    <text evidence="1">Belongs to the ETF alpha-subunit/FixB family.</text>
</comment>
<accession>Q32K55</accession>
<keyword id="KW-0249">Electron transport</keyword>
<keyword id="KW-0274">FAD</keyword>
<keyword id="KW-0285">Flavoprotein</keyword>
<keyword id="KW-1185">Reference proteome</keyword>
<keyword id="KW-0813">Transport</keyword>
<dbReference type="EMBL" id="CP000034">
    <property type="protein sequence ID" value="ABB60302.1"/>
    <property type="molecule type" value="Genomic_DNA"/>
</dbReference>
<dbReference type="RefSeq" id="WP_001091506.1">
    <property type="nucleotide sequence ID" value="NC_007606.1"/>
</dbReference>
<dbReference type="RefSeq" id="YP_401791.1">
    <property type="nucleotide sequence ID" value="NC_007606.1"/>
</dbReference>
<dbReference type="SMR" id="Q32K55"/>
<dbReference type="STRING" id="300267.SDY_0064"/>
<dbReference type="EnsemblBacteria" id="ABB60302">
    <property type="protein sequence ID" value="ABB60302"/>
    <property type="gene ID" value="SDY_0064"/>
</dbReference>
<dbReference type="KEGG" id="sdy:SDY_0064"/>
<dbReference type="PATRIC" id="fig|300267.13.peg.72"/>
<dbReference type="HOGENOM" id="CLU_034178_0_1_6"/>
<dbReference type="UniPathway" id="UPA00117"/>
<dbReference type="Proteomes" id="UP000002716">
    <property type="component" value="Chromosome"/>
</dbReference>
<dbReference type="GO" id="GO:0009055">
    <property type="term" value="F:electron transfer activity"/>
    <property type="evidence" value="ECO:0007669"/>
    <property type="project" value="InterPro"/>
</dbReference>
<dbReference type="GO" id="GO:0050660">
    <property type="term" value="F:flavin adenine dinucleotide binding"/>
    <property type="evidence" value="ECO:0007669"/>
    <property type="project" value="InterPro"/>
</dbReference>
<dbReference type="GO" id="GO:0009437">
    <property type="term" value="P:carnitine metabolic process"/>
    <property type="evidence" value="ECO:0007669"/>
    <property type="project" value="UniProtKB-UniRule"/>
</dbReference>
<dbReference type="GO" id="GO:0033539">
    <property type="term" value="P:fatty acid beta-oxidation using acyl-CoA dehydrogenase"/>
    <property type="evidence" value="ECO:0007669"/>
    <property type="project" value="TreeGrafter"/>
</dbReference>
<dbReference type="FunFam" id="3.40.50.1220:FF:000004">
    <property type="entry name" value="Electron transfer flavoprotein"/>
    <property type="match status" value="1"/>
</dbReference>
<dbReference type="FunFam" id="3.40.50.620:FF:000067">
    <property type="entry name" value="Protein FixB"/>
    <property type="match status" value="1"/>
</dbReference>
<dbReference type="Gene3D" id="3.40.50.620">
    <property type="entry name" value="HUPs"/>
    <property type="match status" value="1"/>
</dbReference>
<dbReference type="Gene3D" id="3.40.50.1220">
    <property type="entry name" value="TPP-binding domain"/>
    <property type="match status" value="1"/>
</dbReference>
<dbReference type="HAMAP" id="MF_01056">
    <property type="entry name" value="FixB"/>
    <property type="match status" value="1"/>
</dbReference>
<dbReference type="InterPro" id="IPR029035">
    <property type="entry name" value="DHS-like_NAD/FAD-binding_dom"/>
</dbReference>
<dbReference type="InterPro" id="IPR014730">
    <property type="entry name" value="ETF_a/b_N"/>
</dbReference>
<dbReference type="InterPro" id="IPR001308">
    <property type="entry name" value="ETF_a/FixB"/>
</dbReference>
<dbReference type="InterPro" id="IPR014731">
    <property type="entry name" value="ETF_asu_C"/>
</dbReference>
<dbReference type="InterPro" id="IPR018206">
    <property type="entry name" value="ETF_asu_C_CS"/>
</dbReference>
<dbReference type="InterPro" id="IPR023461">
    <property type="entry name" value="FixB"/>
</dbReference>
<dbReference type="InterPro" id="IPR014729">
    <property type="entry name" value="Rossmann-like_a/b/a_fold"/>
</dbReference>
<dbReference type="NCBIfam" id="NF002889">
    <property type="entry name" value="PRK03363.1"/>
    <property type="match status" value="1"/>
</dbReference>
<dbReference type="PANTHER" id="PTHR43153">
    <property type="entry name" value="ELECTRON TRANSFER FLAVOPROTEIN ALPHA"/>
    <property type="match status" value="1"/>
</dbReference>
<dbReference type="PANTHER" id="PTHR43153:SF5">
    <property type="entry name" value="PROTEIN FIXB-RELATED"/>
    <property type="match status" value="1"/>
</dbReference>
<dbReference type="Pfam" id="PF01012">
    <property type="entry name" value="ETF"/>
    <property type="match status" value="1"/>
</dbReference>
<dbReference type="Pfam" id="PF00766">
    <property type="entry name" value="ETF_alpha"/>
    <property type="match status" value="1"/>
</dbReference>
<dbReference type="PIRSF" id="PIRSF000089">
    <property type="entry name" value="Electra_flavoP_a"/>
    <property type="match status" value="1"/>
</dbReference>
<dbReference type="SMART" id="SM00893">
    <property type="entry name" value="ETF"/>
    <property type="match status" value="1"/>
</dbReference>
<dbReference type="SUPFAM" id="SSF52402">
    <property type="entry name" value="Adenine nucleotide alpha hydrolases-like"/>
    <property type="match status" value="1"/>
</dbReference>
<dbReference type="SUPFAM" id="SSF52467">
    <property type="entry name" value="DHS-like NAD/FAD-binding domain"/>
    <property type="match status" value="1"/>
</dbReference>
<dbReference type="PROSITE" id="PS00696">
    <property type="entry name" value="ETF_ALPHA"/>
    <property type="match status" value="1"/>
</dbReference>
<evidence type="ECO:0000255" key="1">
    <source>
        <dbReference type="HAMAP-Rule" id="MF_01056"/>
    </source>
</evidence>
<protein>
    <recommendedName>
        <fullName evidence="1">Protein FixB</fullName>
    </recommendedName>
</protein>